<protein>
    <recommendedName>
        <fullName evidence="9">Tudor domain-containing 6-like</fullName>
        <shortName>tdrd6-like</shortName>
    </recommendedName>
    <alternativeName>
        <fullName evidence="8">Xenopus tudor repeat</fullName>
    </alternativeName>
</protein>
<proteinExistence type="evidence at protein level"/>
<sequence length="1905" mass="213660">MVEVYFIDHGNTEMVDWYNVKKLPAELREMPGLAIHCCVADICPLGVRWSPEAILAFKIAVVDKKLIIYVVSKELHKYIIEVLDNSRIEQRSMAKILSAAGHAKYEEVEPVAQHTGNMSDIDNETQQQFLGYINKDTSSLKTQQKEDVCSMEDDNSVPYSPYEDQFFEPGATIEVVVSCIISPGLFWCQNASLSSKLEKLMAKIQDYCSSTDCPYERGAYACLAKSSCDGKWYRAFITNNRPGSKANANQVEVLYVDYGITETVLVKDLRCIESELFDLKAQAFRCSLYNLIAPDSENPFEWDTKATLSFHRFVDSSAKKCSEFKCTFFATALVKTELSYIVDVFTPFASICKLLVELGHAKQLSHTTLAPSVQLQTYYYSMHDIKIGGEEEVYITYVNSSLEFYCQLSRNTETIDMIASATARVCSEVRKFELSVTPGPLCLAKFSDQQWYRCFINTNKNSTDAFFVDYGNTEKVNKEEMLPIPSDAYELLHFPMQAIKCSLSDMPDTVPSDVVLWFENHVLEKPLRAIIVAKETDGKLIVELYDGSQQINSILKTKLGWKSSRAEGSFGNSEKRNQLNDLDRGGRKETTSKFQPYSQGSKFSPDLDGHSQNGLTYQKPEFQTKEREQFEQKPNLRTPRSYNNDREVYQVQKNMSQSGFAPQKTGGFRSKDREAFEQRPNLKASGLYSQGRETPSMSQNSSYSGFPPQKTGAFRSKERQVSEHKQNSNPPKFYNQERKLSPQLRKASQNGSSSQTEAFWSSGSDQSSEHKPDNASQQRRSTFQESKLTPPLSKLSDLPKQNIALGMKSSVYVAHTNTISDFYVHIAQNTDLSNISEILNNEKGPSDQLDEKYVNLGDLICAFYEDGLYYRAVITEKCADGLLAQYIDYGNTSVIPPTKIYKLPPSLLSIPAMSICCALDKCTTSACEQNMDDLMLKFSERTGDLELSCEFVQYNNRKWNVILCDDQGCINDLFISVSGDPMLNPPLPKEPSVTSETLISASLFVWNLPELGETVEAFASAVDSPEHFWCQLATANVDSLAVKVQEAGEHSIHDGRFSAEIEVGSPCNVIYSDDNYWYRAAVTKMKDDKVTVRFVDYGNEETLQMEQVRRLPADIAAIPVQAFPCSLANFNLSEGCWSSEANTFFYDKVTEGLLEITVLHIQELGLCKIPQASVNVKYNGEDINCEMRRFWQDSFVNTNPFTESLNAKEETAIEDNVIPSQADEDDHSEPSEEPCASESIETPAVDGEVLTANDETKLEALPVSSAEEAAEITDNTDVELMRTEYLLHEVQKSSDLSCLELTLDEDVPDEKNSGTPAVTPLAAEDLCIDYDESNIKKSYSGVTTEMDNRELHQDEDLDLWTSAAQDQEIASSEILGDVPIDKECNYSVEEATDQSCTNIGLEEGPEPVENAFTENINDETDIANVQSKGEEEEAYLVPEESTVAECEIEDFEPEVDLQSKENEGLPDIPLLEGDGDDSVSPEEVSSHEMNEAEGLEDQDQELLGYTGTERAMDDYEVLQSEEQAEDLVPEEDPGTETEHRSYLFEAEEADLPSQEHKDFPEQEEDRVAEHKNDISEPDLQSKEQKEDLVPEEDPGTETEHRSYLFEAEETDLPSQEHKDTVTYTDIPLLEGGVDDFGSKETVSIDYNYEYVTEDVEDLDTENQESQICISGSDNRSKESGPVDLQDFEDEVLFQYTEPTADSASDVRQGDECEFAAHSDENIESPEHPVHTDSTADVCETDVCEPEVADHCHLQDKVVSERTECPVPDDRTKDDHQNNECQCAVDPVENIECQTPVCLVAADRSYTEYTWTVSETESGNMKNIEFQESPAEGDSVGSHGVGATEWKDGEPESLVNPDTPLLEGPVSVDIMHSSDNFEPETDDMEQMEQDQGRMKIESSYVPAPSV</sequence>
<accession>Q90WE3</accession>
<organism evidence="10">
    <name type="scientific">Xenopus laevis</name>
    <name type="common">African clawed frog</name>
    <dbReference type="NCBI Taxonomy" id="8355"/>
    <lineage>
        <taxon>Eukaryota</taxon>
        <taxon>Metazoa</taxon>
        <taxon>Chordata</taxon>
        <taxon>Craniata</taxon>
        <taxon>Vertebrata</taxon>
        <taxon>Euteleostomi</taxon>
        <taxon>Amphibia</taxon>
        <taxon>Batrachia</taxon>
        <taxon>Anura</taxon>
        <taxon>Pipoidea</taxon>
        <taxon>Pipidae</taxon>
        <taxon>Xenopodinae</taxon>
        <taxon>Xenopus</taxon>
        <taxon>Xenopus</taxon>
    </lineage>
</organism>
<name>TDRD6_XENLA</name>
<feature type="chain" id="PRO_0000448695" description="Tudor domain-containing 6-like">
    <location>
        <begin position="1"/>
        <end position="1905"/>
    </location>
</feature>
<feature type="domain" description="Tudor 1" evidence="3">
    <location>
        <begin position="1"/>
        <end position="30"/>
    </location>
</feature>
<feature type="domain" description="Tudor 2" evidence="3">
    <location>
        <begin position="215"/>
        <end position="279"/>
    </location>
</feature>
<feature type="domain" description="Tudor 3" evidence="3">
    <location>
        <begin position="435"/>
        <end position="491"/>
    </location>
</feature>
<feature type="domain" description="Tudor 4" evidence="3">
    <location>
        <begin position="853"/>
        <end position="910"/>
    </location>
</feature>
<feature type="domain" description="Tudor 5" evidence="3">
    <location>
        <begin position="1060"/>
        <end position="1118"/>
    </location>
</feature>
<feature type="region of interest" description="Disordered" evidence="4">
    <location>
        <begin position="564"/>
        <end position="795"/>
    </location>
</feature>
<feature type="region of interest" description="Disordered" evidence="4">
    <location>
        <begin position="1213"/>
        <end position="1245"/>
    </location>
</feature>
<feature type="region of interest" description="Disordered" evidence="4">
    <location>
        <begin position="1449"/>
        <end position="1599"/>
    </location>
</feature>
<feature type="region of interest" description="Disordered" evidence="4">
    <location>
        <begin position="1655"/>
        <end position="1682"/>
    </location>
</feature>
<feature type="region of interest" description="Disordered" evidence="4">
    <location>
        <begin position="1827"/>
        <end position="1905"/>
    </location>
</feature>
<feature type="compositionally biased region" description="Basic and acidic residues" evidence="4">
    <location>
        <begin position="573"/>
        <end position="591"/>
    </location>
</feature>
<feature type="compositionally biased region" description="Polar residues" evidence="4">
    <location>
        <begin position="592"/>
        <end position="602"/>
    </location>
</feature>
<feature type="compositionally biased region" description="Basic and acidic residues" evidence="4">
    <location>
        <begin position="622"/>
        <end position="631"/>
    </location>
</feature>
<feature type="compositionally biased region" description="Polar residues" evidence="4">
    <location>
        <begin position="651"/>
        <end position="660"/>
    </location>
</feature>
<feature type="compositionally biased region" description="Polar residues" evidence="4">
    <location>
        <begin position="687"/>
        <end position="704"/>
    </location>
</feature>
<feature type="compositionally biased region" description="Basic and acidic residues" evidence="4">
    <location>
        <begin position="715"/>
        <end position="726"/>
    </location>
</feature>
<feature type="compositionally biased region" description="Polar residues" evidence="4">
    <location>
        <begin position="746"/>
        <end position="766"/>
    </location>
</feature>
<feature type="compositionally biased region" description="Polar residues" evidence="4">
    <location>
        <begin position="774"/>
        <end position="787"/>
    </location>
</feature>
<feature type="compositionally biased region" description="Acidic residues" evidence="4">
    <location>
        <begin position="1491"/>
        <end position="1500"/>
    </location>
</feature>
<feature type="compositionally biased region" description="Acidic residues" evidence="4">
    <location>
        <begin position="1522"/>
        <end position="1535"/>
    </location>
</feature>
<feature type="compositionally biased region" description="Basic and acidic residues" evidence="4">
    <location>
        <begin position="1553"/>
        <end position="1588"/>
    </location>
</feature>
<feature type="compositionally biased region" description="Polar residues" evidence="4">
    <location>
        <begin position="1663"/>
        <end position="1673"/>
    </location>
</feature>
<feature type="compositionally biased region" description="Acidic residues" evidence="4">
    <location>
        <begin position="1876"/>
        <end position="1887"/>
    </location>
</feature>
<keyword id="KW-0963">Cytoplasm</keyword>
<keyword id="KW-0221">Differentiation</keyword>
<keyword id="KW-0896">Oogenesis</keyword>
<keyword id="KW-1185">Reference proteome</keyword>
<keyword id="KW-0677">Repeat</keyword>
<keyword id="KW-0744">Spermatogenesis</keyword>
<dbReference type="EMBL" id="AB066588">
    <property type="protein sequence ID" value="BAB62226.1"/>
    <property type="molecule type" value="mRNA"/>
</dbReference>
<dbReference type="RefSeq" id="NP_001082149.1">
    <property type="nucleotide sequence ID" value="NM_001088680.1"/>
</dbReference>
<dbReference type="IntAct" id="Q90WE3">
    <property type="interactions" value="1"/>
</dbReference>
<dbReference type="MINT" id="Q90WE3"/>
<dbReference type="GeneID" id="398252"/>
<dbReference type="KEGG" id="xla:398252"/>
<dbReference type="AGR" id="Xenbase:XB-GENE-6079334"/>
<dbReference type="CTD" id="398252"/>
<dbReference type="Xenbase" id="XB-GENE-6079334">
    <property type="gene designation" value="tdrd6.L"/>
</dbReference>
<dbReference type="OrthoDB" id="9989103at2759"/>
<dbReference type="Proteomes" id="UP000186698">
    <property type="component" value="Chromosome 5L"/>
</dbReference>
<dbReference type="Bgee" id="398252">
    <property type="expression patterns" value="Expressed in testis and 7 other cell types or tissues"/>
</dbReference>
<dbReference type="GO" id="GO:0043186">
    <property type="term" value="C:P granule"/>
    <property type="evidence" value="ECO:0000318"/>
    <property type="project" value="GO_Central"/>
</dbReference>
<dbReference type="GO" id="GO:0030719">
    <property type="term" value="P:P granule organization"/>
    <property type="evidence" value="ECO:0000318"/>
    <property type="project" value="GO_Central"/>
</dbReference>
<dbReference type="GO" id="GO:0034587">
    <property type="term" value="P:piRNA processing"/>
    <property type="evidence" value="ECO:0000318"/>
    <property type="project" value="GO_Central"/>
</dbReference>
<dbReference type="GO" id="GO:0007283">
    <property type="term" value="P:spermatogenesis"/>
    <property type="evidence" value="ECO:0000318"/>
    <property type="project" value="GO_Central"/>
</dbReference>
<dbReference type="CDD" id="cd20424">
    <property type="entry name" value="Tudor_TDRD6_rpt5"/>
    <property type="match status" value="1"/>
</dbReference>
<dbReference type="CDD" id="cd20426">
    <property type="entry name" value="Tudor_TDRD6_rpt7"/>
    <property type="match status" value="1"/>
</dbReference>
<dbReference type="FunFam" id="2.30.30.140:FF:000018">
    <property type="entry name" value="Serine/threonine-protein kinase 31"/>
    <property type="match status" value="1"/>
</dbReference>
<dbReference type="Gene3D" id="2.30.30.140">
    <property type="match status" value="4"/>
</dbReference>
<dbReference type="Gene3D" id="2.40.50.90">
    <property type="match status" value="5"/>
</dbReference>
<dbReference type="InterPro" id="IPR035437">
    <property type="entry name" value="SNase_OB-fold_sf"/>
</dbReference>
<dbReference type="InterPro" id="IPR002999">
    <property type="entry name" value="Tudor"/>
</dbReference>
<dbReference type="InterPro" id="IPR050621">
    <property type="entry name" value="Tudor_domain_containing"/>
</dbReference>
<dbReference type="PANTHER" id="PTHR22948:SF29">
    <property type="entry name" value="FI02030P-RELATED"/>
    <property type="match status" value="1"/>
</dbReference>
<dbReference type="PANTHER" id="PTHR22948">
    <property type="entry name" value="TUDOR DOMAIN CONTAINING PROTEIN"/>
    <property type="match status" value="1"/>
</dbReference>
<dbReference type="Pfam" id="PF00567">
    <property type="entry name" value="TUDOR"/>
    <property type="match status" value="5"/>
</dbReference>
<dbReference type="SMART" id="SM00333">
    <property type="entry name" value="TUDOR"/>
    <property type="match status" value="4"/>
</dbReference>
<dbReference type="SUPFAM" id="SSF63748">
    <property type="entry name" value="Tudor/PWWP/MBT"/>
    <property type="match status" value="5"/>
</dbReference>
<dbReference type="PROSITE" id="PS50304">
    <property type="entry name" value="TUDOR"/>
    <property type="match status" value="5"/>
</dbReference>
<evidence type="ECO:0000250" key="1">
    <source>
        <dbReference type="UniProtKB" id="F1R237"/>
    </source>
</evidence>
<evidence type="ECO:0000250" key="2">
    <source>
        <dbReference type="UniProtKB" id="P61407"/>
    </source>
</evidence>
<evidence type="ECO:0000255" key="3">
    <source>
        <dbReference type="PROSITE-ProRule" id="PRU00211"/>
    </source>
</evidence>
<evidence type="ECO:0000256" key="4">
    <source>
        <dbReference type="SAM" id="MobiDB-lite"/>
    </source>
</evidence>
<evidence type="ECO:0000269" key="5">
    <source>
    </source>
</evidence>
<evidence type="ECO:0000269" key="6">
    <source>
    </source>
</evidence>
<evidence type="ECO:0000269" key="7">
    <source>
    </source>
</evidence>
<evidence type="ECO:0000303" key="8">
    <source>
    </source>
</evidence>
<evidence type="ECO:0000305" key="9"/>
<evidence type="ECO:0000312" key="10">
    <source>
        <dbReference type="EMBL" id="BAB62226.1"/>
    </source>
</evidence>
<evidence type="ECO:0000312" key="11">
    <source>
        <dbReference type="Xenbase" id="XB-GENE-6079334"/>
    </source>
</evidence>
<comment type="function">
    <text evidence="1 2 7">Tudor domain-containing protein involved in germ cell development, more specifically the formation of chromatoid body (during spermiogenesis), Balbiani body (during oogenesis), germ plasm (upon fertilization), and for proper miRNA expression and spliceosome maturation (By similarity). Component of cytoplasmic mRNP particle through interaction with FRGY2, and binds to maternal mRNA related to cell cycle (RCC1, RHAMM, INCENP-A, MAD2L1, HELLS) and a germ plasm specific mRNA (Dead end/Dnd1), it is proposed a role in translational activation of the maternal mRNAs repressed in mRNP particle (PubMed:21314676).</text>
</comment>
<comment type="subunit">
    <text evidence="7">Interacts with FRGY2 (a component of messenger ribonucleoprotein (mRNP) particle) during germ cell development.</text>
</comment>
<comment type="interaction">
    <interactant intactId="EBI-7191460">
        <id>Q90WE3</id>
    </interactant>
    <interactant intactId="EBI-7191401">
        <id>A8KBF3</id>
        <label>piwil2</label>
    </interactant>
    <organismsDiffer>true</organismsDiffer>
    <experiments>4</experiments>
</comment>
<comment type="subcellular location">
    <subcellularLocation>
        <location evidence="7">Cytoplasm</location>
    </subcellularLocation>
    <text evidence="7">Localizes in the germ plasm, most precisely in the cytoplasmic mRNP particle (messenger ribonucleoprotein, which corresponds to mRNA with bound proteins).</text>
</comment>
<comment type="tissue specificity">
    <text evidence="5">Expressed in testis.</text>
</comment>
<comment type="developmental stage">
    <text evidence="5 6 7">Presents exclusively in early embryonic and germline cells (PubMed:15771630, PubMed:21314676). Expressed in both spermatogenic and oogenic cells except for round spermatids and the later stage (PubMed:12112575). Expressed in early stage embryos and decrease after the gastrula stage (PubMed:12112575).</text>
</comment>
<comment type="domain">
    <text evidence="2">The tudor domains recognize and bind to proteins with dimethylated arginine residues.</text>
</comment>
<comment type="disruption phenotype">
    <text evidence="6">Loss-of-function in embryos causes arrest of karyokinesis progression.</text>
</comment>
<reference key="1">
    <citation type="journal article" date="2002" name="Mol. Reprod. Dev.">
        <title>Two novel genes expressed in Xenopus germ line: characteristic features of putative protein structures, their gene expression profiles and their possible roles in gametogenesis and embryogenesis.</title>
        <authorList>
            <person name="Ikema Y."/>
            <person name="Hiyoshi M."/>
            <person name="Daiyasu H."/>
            <person name="Toh H."/>
            <person name="Mori M."/>
            <person name="Takamune K."/>
        </authorList>
    </citation>
    <scope>NUCLEOTIDE SEQUENCE [MRNA]</scope>
    <scope>DEVELOPMENTAL STAGE</scope>
    <scope>TISSUE SPECIFICITY</scope>
    <source>
        <tissue>Testis</tissue>
    </source>
</reference>
<reference key="2">
    <citation type="journal article" date="2005" name="Dev. Growth Differ.">
        <title>Involvement of Xtr (Xenopus tudor repeat) in microtubule assembly around nucleus and karyokinesis during cleavage in Xenopus laevis.</title>
        <authorList>
            <person name="Hiyoshi M."/>
            <person name="Nakajo N."/>
            <person name="Abe S."/>
            <person name="Takamune K."/>
        </authorList>
    </citation>
    <scope>DEVELOPMENTAL STAGE</scope>
    <scope>DISRUPTION PHENOTYPE</scope>
</reference>
<reference key="3">
    <citation type="journal article" date="2009" name="Dev. Growth Differ.">
        <title>Xtr, a plural tudor domain-containing protein, coexists with FRGY2 both in cytoplasmic mRNP particle and germ plasm in Xenopus embryo: its possible role in translational regulation of maternal mRNAs.</title>
        <authorList>
            <person name="Golam Mostafa M."/>
            <person name="Sugimoto T."/>
            <person name="Hiyoshi M."/>
            <person name="Kawasaki H."/>
            <person name="Kubo H."/>
            <person name="Matsumoto K."/>
            <person name="Abe S."/>
            <person name="Takamune K."/>
        </authorList>
    </citation>
    <scope>FUNCTION</scope>
    <scope>SUBCELLULAR LOCATION</scope>
    <scope>INTERACTION WITH FRGY2</scope>
    <scope>DEVELOPMENTAL STAGE</scope>
</reference>
<gene>
    <name evidence="11" type="primary">tdrd6</name>
    <name evidence="10" type="synonym">xtr</name>
</gene>